<evidence type="ECO:0000255" key="1"/>
<evidence type="ECO:0000305" key="2"/>
<accession>O33953</accession>
<dbReference type="EMBL" id="U78086">
    <property type="protein sequence ID" value="AAC45830.1"/>
    <property type="status" value="ALT_INIT"/>
    <property type="molecule type" value="Genomic_DNA"/>
</dbReference>
<dbReference type="SMR" id="O33953"/>
<dbReference type="STRING" id="585034.ECIAI1_2107"/>
<dbReference type="UniPathway" id="UPA00030"/>
<dbReference type="GO" id="GO:0005886">
    <property type="term" value="C:plasma membrane"/>
    <property type="evidence" value="ECO:0007669"/>
    <property type="project" value="UniProtKB-SubCell"/>
</dbReference>
<dbReference type="GO" id="GO:0004713">
    <property type="term" value="F:protein tyrosine kinase activity"/>
    <property type="evidence" value="ECO:0007669"/>
    <property type="project" value="TreeGrafter"/>
</dbReference>
<dbReference type="GO" id="GO:0009103">
    <property type="term" value="P:lipopolysaccharide biosynthetic process"/>
    <property type="evidence" value="ECO:0007669"/>
    <property type="project" value="UniProtKB-UniPathway"/>
</dbReference>
<dbReference type="Gene3D" id="3.30.1890.10">
    <property type="entry name" value="FepE-like"/>
    <property type="match status" value="1"/>
</dbReference>
<dbReference type="InterPro" id="IPR050445">
    <property type="entry name" value="Bact_polysacc_biosynth/exp"/>
</dbReference>
<dbReference type="InterPro" id="IPR003856">
    <property type="entry name" value="LPS_length_determ_N_term"/>
</dbReference>
<dbReference type="NCBIfam" id="NF012015">
    <property type="entry name" value="PRK15471.1"/>
    <property type="match status" value="1"/>
</dbReference>
<dbReference type="PANTHER" id="PTHR32309:SF29">
    <property type="entry name" value="CHAIN LENGTH DETERMINANT PROTEIN"/>
    <property type="match status" value="1"/>
</dbReference>
<dbReference type="PANTHER" id="PTHR32309">
    <property type="entry name" value="TYROSINE-PROTEIN KINASE"/>
    <property type="match status" value="1"/>
</dbReference>
<dbReference type="Pfam" id="PF02706">
    <property type="entry name" value="Wzz"/>
    <property type="match status" value="1"/>
</dbReference>
<dbReference type="SUPFAM" id="SSF160355">
    <property type="entry name" value="Bacterial polysaccharide co-polymerase-like"/>
    <property type="match status" value="1"/>
</dbReference>
<sequence length="325" mass="36247">MRVENNNVSGQNLDPEQIDLIDLLVQLWRGKMTIIISVIVAIVLAIGYLVVAKEKWTSTAIVTQPDVGQIAGYNNAINVIYGSAAPKVSEIQSILIGRFSTTFSALAETLDNQEEPEKLTIEPTVKNQSLPLAVSYVGQSPEAAQKQLAQYIQQVDDQVNDELEKDLKDNIALRMKNLQDSLKTQEVVAQEQKELRIRQIQEALQYANQAQVTKPQIQQTQDVTQDTMFLLGSDALESMVKHEASRPLVFSSTYYQTRQNLLDIESLKVDDLDIHAYRYVMKPTLPIRRDSPKKAITLILAVLLGGMVGAGIVLGRNALRNYNAK</sequence>
<organism>
    <name type="scientific">Escherichia coli</name>
    <dbReference type="NCBI Taxonomy" id="562"/>
    <lineage>
        <taxon>Bacteria</taxon>
        <taxon>Pseudomonadati</taxon>
        <taxon>Pseudomonadota</taxon>
        <taxon>Gammaproteobacteria</taxon>
        <taxon>Enterobacterales</taxon>
        <taxon>Enterobacteriaceae</taxon>
        <taxon>Escherichia</taxon>
    </lineage>
</organism>
<keyword id="KW-0997">Cell inner membrane</keyword>
<keyword id="KW-1003">Cell membrane</keyword>
<keyword id="KW-0448">Lipopolysaccharide biosynthesis</keyword>
<keyword id="KW-0472">Membrane</keyword>
<keyword id="KW-0812">Transmembrane</keyword>
<keyword id="KW-1133">Transmembrane helix</keyword>
<gene>
    <name type="primary">wzzB</name>
    <name type="synonym">cld</name>
    <name type="synonym">rol</name>
</gene>
<name>WZZB8_ECOLX</name>
<feature type="chain" id="PRO_0000065988" description="Chain length determinant protein">
    <location>
        <begin position="1"/>
        <end position="325"/>
    </location>
</feature>
<feature type="topological domain" description="Cytoplasmic" evidence="1">
    <location>
        <begin position="1"/>
        <end position="31"/>
    </location>
</feature>
<feature type="transmembrane region" description="Helical" evidence="1">
    <location>
        <begin position="32"/>
        <end position="52"/>
    </location>
</feature>
<feature type="topological domain" description="Periplasmic" evidence="1">
    <location>
        <begin position="53"/>
        <end position="294"/>
    </location>
</feature>
<feature type="transmembrane region" description="Helical" evidence="1">
    <location>
        <begin position="295"/>
        <end position="315"/>
    </location>
</feature>
<feature type="topological domain" description="Cytoplasmic" evidence="1">
    <location>
        <begin position="316"/>
        <end position="325"/>
    </location>
</feature>
<comment type="function">
    <text>Confers a modal distribution of chain length on the O-antigen component of lipopolysaccharide (LPS). Gives rise to a reduced number of short chain molecules and increases in numbers of longer molecules, with a modal value of 13 (in strain O111/M92) and of 17 (in strain K12).</text>
</comment>
<comment type="pathway">
    <text>Bacterial outer membrane biogenesis; lipopolysaccharide biosynthesis.</text>
</comment>
<comment type="subcellular location">
    <subcellularLocation>
        <location>Cell inner membrane</location>
        <topology>Multi-pass membrane protein</topology>
    </subcellularLocation>
</comment>
<comment type="similarity">
    <text evidence="2">Belongs to the WzzB/Cld/Rol family.</text>
</comment>
<comment type="sequence caution" evidence="2">
    <conflict type="erroneous initiation">
        <sequence resource="EMBL-CDS" id="AAC45830"/>
    </conflict>
</comment>
<protein>
    <recommendedName>
        <fullName>Chain length determinant protein</fullName>
    </recommendedName>
    <alternativeName>
        <fullName>Polysaccharide antigen chain regulator</fullName>
    </alternativeName>
</protein>
<reference key="1">
    <citation type="journal article" date="1997" name="Mol. Microbiol.">
        <title>Molecular and functional analysis of genes required for expression of group IB K antigens in Escherichia coli: characterization of the his-region containing gene clusters for multiple cell-surface polysaccharides.</title>
        <authorList>
            <person name="Amor P.A."/>
            <person name="Whitfield C."/>
        </authorList>
    </citation>
    <scope>NUCLEOTIDE SEQUENCE [GENOMIC DNA]</scope>
    <source>
        <strain>O8:K40 / 2775</strain>
    </source>
</reference>
<proteinExistence type="inferred from homology"/>